<evidence type="ECO:0000255" key="1">
    <source>
        <dbReference type="HAMAP-Rule" id="MF_01021"/>
    </source>
</evidence>
<name>HIS3_METM6</name>
<reference key="1">
    <citation type="submission" date="2007-10" db="EMBL/GenBank/DDBJ databases">
        <title>Complete sequence of Methanococcus maripaludis C6.</title>
        <authorList>
            <consortium name="US DOE Joint Genome Institute"/>
            <person name="Copeland A."/>
            <person name="Lucas S."/>
            <person name="Lapidus A."/>
            <person name="Barry K."/>
            <person name="Glavina del Rio T."/>
            <person name="Dalin E."/>
            <person name="Tice H."/>
            <person name="Pitluck S."/>
            <person name="Clum A."/>
            <person name="Schmutz J."/>
            <person name="Larimer F."/>
            <person name="Land M."/>
            <person name="Hauser L."/>
            <person name="Kyrpides N."/>
            <person name="Mikhailova N."/>
            <person name="Sieprawska-Lupa M."/>
            <person name="Whitman W.B."/>
            <person name="Richardson P."/>
        </authorList>
    </citation>
    <scope>NUCLEOTIDE SEQUENCE [LARGE SCALE GENOMIC DNA]</scope>
    <source>
        <strain>C6 / ATCC BAA-1332</strain>
    </source>
</reference>
<dbReference type="EC" id="3.5.4.19" evidence="1"/>
<dbReference type="EMBL" id="CP000867">
    <property type="protein sequence ID" value="ABX01490.1"/>
    <property type="molecule type" value="Genomic_DNA"/>
</dbReference>
<dbReference type="SMR" id="A9A817"/>
<dbReference type="STRING" id="444158.MmarC6_0673"/>
<dbReference type="KEGG" id="mmx:MmarC6_0673"/>
<dbReference type="eggNOG" id="arCOG02676">
    <property type="taxonomic scope" value="Archaea"/>
</dbReference>
<dbReference type="HOGENOM" id="CLU_048577_5_3_2"/>
<dbReference type="OrthoDB" id="5853at2157"/>
<dbReference type="PhylomeDB" id="A9A817"/>
<dbReference type="UniPathway" id="UPA00031">
    <property type="reaction ID" value="UER00008"/>
</dbReference>
<dbReference type="GO" id="GO:0005737">
    <property type="term" value="C:cytoplasm"/>
    <property type="evidence" value="ECO:0007669"/>
    <property type="project" value="UniProtKB-SubCell"/>
</dbReference>
<dbReference type="GO" id="GO:0000287">
    <property type="term" value="F:magnesium ion binding"/>
    <property type="evidence" value="ECO:0007669"/>
    <property type="project" value="UniProtKB-UniRule"/>
</dbReference>
<dbReference type="GO" id="GO:0004635">
    <property type="term" value="F:phosphoribosyl-AMP cyclohydrolase activity"/>
    <property type="evidence" value="ECO:0007669"/>
    <property type="project" value="UniProtKB-UniRule"/>
</dbReference>
<dbReference type="GO" id="GO:0008270">
    <property type="term" value="F:zinc ion binding"/>
    <property type="evidence" value="ECO:0007669"/>
    <property type="project" value="UniProtKB-UniRule"/>
</dbReference>
<dbReference type="GO" id="GO:0000105">
    <property type="term" value="P:L-histidine biosynthetic process"/>
    <property type="evidence" value="ECO:0007669"/>
    <property type="project" value="UniProtKB-UniRule"/>
</dbReference>
<dbReference type="FunFam" id="3.10.20.810:FF:000001">
    <property type="entry name" value="Histidine biosynthesis bifunctional protein HisIE"/>
    <property type="match status" value="1"/>
</dbReference>
<dbReference type="Gene3D" id="3.10.20.810">
    <property type="entry name" value="Phosphoribosyl-AMP cyclohydrolase"/>
    <property type="match status" value="1"/>
</dbReference>
<dbReference type="HAMAP" id="MF_01021">
    <property type="entry name" value="HisI"/>
    <property type="match status" value="1"/>
</dbReference>
<dbReference type="InterPro" id="IPR026660">
    <property type="entry name" value="PRA-CH"/>
</dbReference>
<dbReference type="InterPro" id="IPR002496">
    <property type="entry name" value="PRib_AMP_CycHydrolase_dom"/>
</dbReference>
<dbReference type="InterPro" id="IPR038019">
    <property type="entry name" value="PRib_AMP_CycHydrolase_sf"/>
</dbReference>
<dbReference type="NCBIfam" id="NF000768">
    <property type="entry name" value="PRK00051.1"/>
    <property type="match status" value="1"/>
</dbReference>
<dbReference type="PANTHER" id="PTHR42945">
    <property type="entry name" value="HISTIDINE BIOSYNTHESIS BIFUNCTIONAL PROTEIN"/>
    <property type="match status" value="1"/>
</dbReference>
<dbReference type="PANTHER" id="PTHR42945:SF1">
    <property type="entry name" value="HISTIDINE BIOSYNTHESIS BIFUNCTIONAL PROTEIN HIS7"/>
    <property type="match status" value="1"/>
</dbReference>
<dbReference type="Pfam" id="PF01502">
    <property type="entry name" value="PRA-CH"/>
    <property type="match status" value="1"/>
</dbReference>
<dbReference type="SUPFAM" id="SSF141734">
    <property type="entry name" value="HisI-like"/>
    <property type="match status" value="1"/>
</dbReference>
<accession>A9A817</accession>
<protein>
    <recommendedName>
        <fullName evidence="1">Phosphoribosyl-AMP cyclohydrolase</fullName>
        <shortName evidence="1">PRA-CH</shortName>
        <ecNumber evidence="1">3.5.4.19</ecNumber>
    </recommendedName>
</protein>
<sequence>MDLDVKEIIKNMNLKFRNIEGKKLLLAISTDKYGNVLMTAFMSEESLKKSIETGFMHYYSTSRDKLWRKGEESGNIQKIINVFRDCDGDALLFTVEQTGWACHEGYMSCFHNKIDLNTGKSTVVGNKLD</sequence>
<feature type="chain" id="PRO_1000135354" description="Phosphoribosyl-AMP cyclohydrolase">
    <location>
        <begin position="1"/>
        <end position="129"/>
    </location>
</feature>
<feature type="binding site" evidence="1">
    <location>
        <position position="85"/>
    </location>
    <ligand>
        <name>Mg(2+)</name>
        <dbReference type="ChEBI" id="CHEBI:18420"/>
    </ligand>
</feature>
<feature type="binding site" evidence="1">
    <location>
        <position position="86"/>
    </location>
    <ligand>
        <name>Zn(2+)</name>
        <dbReference type="ChEBI" id="CHEBI:29105"/>
        <note>ligand shared between dimeric partners</note>
    </ligand>
</feature>
<feature type="binding site" evidence="1">
    <location>
        <position position="87"/>
    </location>
    <ligand>
        <name>Mg(2+)</name>
        <dbReference type="ChEBI" id="CHEBI:18420"/>
    </ligand>
</feature>
<feature type="binding site" evidence="1">
    <location>
        <position position="89"/>
    </location>
    <ligand>
        <name>Mg(2+)</name>
        <dbReference type="ChEBI" id="CHEBI:18420"/>
    </ligand>
</feature>
<feature type="binding site" evidence="1">
    <location>
        <position position="102"/>
    </location>
    <ligand>
        <name>Zn(2+)</name>
        <dbReference type="ChEBI" id="CHEBI:29105"/>
        <note>ligand shared between dimeric partners</note>
    </ligand>
</feature>
<feature type="binding site" evidence="1">
    <location>
        <position position="109"/>
    </location>
    <ligand>
        <name>Zn(2+)</name>
        <dbReference type="ChEBI" id="CHEBI:29105"/>
        <note>ligand shared between dimeric partners</note>
    </ligand>
</feature>
<proteinExistence type="inferred from homology"/>
<organism>
    <name type="scientific">Methanococcus maripaludis (strain C6 / ATCC BAA-1332)</name>
    <dbReference type="NCBI Taxonomy" id="444158"/>
    <lineage>
        <taxon>Archaea</taxon>
        <taxon>Methanobacteriati</taxon>
        <taxon>Methanobacteriota</taxon>
        <taxon>Methanomada group</taxon>
        <taxon>Methanococci</taxon>
        <taxon>Methanococcales</taxon>
        <taxon>Methanococcaceae</taxon>
        <taxon>Methanococcus</taxon>
    </lineage>
</organism>
<comment type="function">
    <text evidence="1">Catalyzes the hydrolysis of the adenine ring of phosphoribosyl-AMP.</text>
</comment>
<comment type="catalytic activity">
    <reaction evidence="1">
        <text>1-(5-phospho-beta-D-ribosyl)-5'-AMP + H2O = 1-(5-phospho-beta-D-ribosyl)-5-[(5-phospho-beta-D-ribosylamino)methylideneamino]imidazole-4-carboxamide</text>
        <dbReference type="Rhea" id="RHEA:20049"/>
        <dbReference type="ChEBI" id="CHEBI:15377"/>
        <dbReference type="ChEBI" id="CHEBI:58435"/>
        <dbReference type="ChEBI" id="CHEBI:59457"/>
        <dbReference type="EC" id="3.5.4.19"/>
    </reaction>
</comment>
<comment type="cofactor">
    <cofactor evidence="1">
        <name>Mg(2+)</name>
        <dbReference type="ChEBI" id="CHEBI:18420"/>
    </cofactor>
    <text evidence="1">Binds 1 Mg(2+) ion per subunit.</text>
</comment>
<comment type="cofactor">
    <cofactor evidence="1">
        <name>Zn(2+)</name>
        <dbReference type="ChEBI" id="CHEBI:29105"/>
    </cofactor>
    <text evidence="1">Binds 1 zinc ion per subunit.</text>
</comment>
<comment type="pathway">
    <text evidence="1">Amino-acid biosynthesis; L-histidine biosynthesis; L-histidine from 5-phospho-alpha-D-ribose 1-diphosphate: step 3/9.</text>
</comment>
<comment type="subunit">
    <text evidence="1">Homodimer.</text>
</comment>
<comment type="subcellular location">
    <subcellularLocation>
        <location evidence="1">Cytoplasm</location>
    </subcellularLocation>
</comment>
<comment type="similarity">
    <text evidence="1">Belongs to the PRA-CH family.</text>
</comment>
<keyword id="KW-0028">Amino-acid biosynthesis</keyword>
<keyword id="KW-0963">Cytoplasm</keyword>
<keyword id="KW-0368">Histidine biosynthesis</keyword>
<keyword id="KW-0378">Hydrolase</keyword>
<keyword id="KW-0460">Magnesium</keyword>
<keyword id="KW-0479">Metal-binding</keyword>
<keyword id="KW-0862">Zinc</keyword>
<gene>
    <name evidence="1" type="primary">hisI</name>
    <name type="ordered locus">MmarC6_0673</name>
</gene>